<accession>C3KXS1</accession>
<keyword id="KW-0030">Aminoacyl-tRNA synthetase</keyword>
<keyword id="KW-0067">ATP-binding</keyword>
<keyword id="KW-0963">Cytoplasm</keyword>
<keyword id="KW-0436">Ligase</keyword>
<keyword id="KW-0547">Nucleotide-binding</keyword>
<keyword id="KW-0648">Protein biosynthesis</keyword>
<organism>
    <name type="scientific">Clostridium botulinum (strain 657 / Type Ba4)</name>
    <dbReference type="NCBI Taxonomy" id="515621"/>
    <lineage>
        <taxon>Bacteria</taxon>
        <taxon>Bacillati</taxon>
        <taxon>Bacillota</taxon>
        <taxon>Clostridia</taxon>
        <taxon>Eubacteriales</taxon>
        <taxon>Clostridiaceae</taxon>
        <taxon>Clostridium</taxon>
    </lineage>
</organism>
<comment type="function">
    <text evidence="1">Catalyzes the attachment of serine to tRNA(Ser). Is also able to aminoacylate tRNA(Sec) with serine, to form the misacylated tRNA L-seryl-tRNA(Sec), which will be further converted into selenocysteinyl-tRNA(Sec).</text>
</comment>
<comment type="catalytic activity">
    <reaction evidence="1">
        <text>tRNA(Ser) + L-serine + ATP = L-seryl-tRNA(Ser) + AMP + diphosphate + H(+)</text>
        <dbReference type="Rhea" id="RHEA:12292"/>
        <dbReference type="Rhea" id="RHEA-COMP:9669"/>
        <dbReference type="Rhea" id="RHEA-COMP:9703"/>
        <dbReference type="ChEBI" id="CHEBI:15378"/>
        <dbReference type="ChEBI" id="CHEBI:30616"/>
        <dbReference type="ChEBI" id="CHEBI:33019"/>
        <dbReference type="ChEBI" id="CHEBI:33384"/>
        <dbReference type="ChEBI" id="CHEBI:78442"/>
        <dbReference type="ChEBI" id="CHEBI:78533"/>
        <dbReference type="ChEBI" id="CHEBI:456215"/>
        <dbReference type="EC" id="6.1.1.11"/>
    </reaction>
</comment>
<comment type="catalytic activity">
    <reaction evidence="1">
        <text>tRNA(Sec) + L-serine + ATP = L-seryl-tRNA(Sec) + AMP + diphosphate + H(+)</text>
        <dbReference type="Rhea" id="RHEA:42580"/>
        <dbReference type="Rhea" id="RHEA-COMP:9742"/>
        <dbReference type="Rhea" id="RHEA-COMP:10128"/>
        <dbReference type="ChEBI" id="CHEBI:15378"/>
        <dbReference type="ChEBI" id="CHEBI:30616"/>
        <dbReference type="ChEBI" id="CHEBI:33019"/>
        <dbReference type="ChEBI" id="CHEBI:33384"/>
        <dbReference type="ChEBI" id="CHEBI:78442"/>
        <dbReference type="ChEBI" id="CHEBI:78533"/>
        <dbReference type="ChEBI" id="CHEBI:456215"/>
        <dbReference type="EC" id="6.1.1.11"/>
    </reaction>
</comment>
<comment type="pathway">
    <text evidence="1">Aminoacyl-tRNA biosynthesis; selenocysteinyl-tRNA(Sec) biosynthesis; L-seryl-tRNA(Sec) from L-serine and tRNA(Sec): step 1/1.</text>
</comment>
<comment type="subunit">
    <text evidence="1">Homodimer. The tRNA molecule binds across the dimer.</text>
</comment>
<comment type="subcellular location">
    <subcellularLocation>
        <location evidence="1">Cytoplasm</location>
    </subcellularLocation>
</comment>
<comment type="domain">
    <text evidence="1">Consists of two distinct domains, a catalytic core and a N-terminal extension that is involved in tRNA binding.</text>
</comment>
<comment type="similarity">
    <text evidence="1">Belongs to the class-II aminoacyl-tRNA synthetase family. Type-1 seryl-tRNA synthetase subfamily.</text>
</comment>
<name>SYS_CLOB6</name>
<evidence type="ECO:0000255" key="1">
    <source>
        <dbReference type="HAMAP-Rule" id="MF_00176"/>
    </source>
</evidence>
<reference key="1">
    <citation type="submission" date="2008-05" db="EMBL/GenBank/DDBJ databases">
        <title>Genome sequence of Clostridium botulinum Ba4 strain 657.</title>
        <authorList>
            <person name="Shrivastava S."/>
            <person name="Brown J.L."/>
            <person name="Bruce D."/>
            <person name="Detter C."/>
            <person name="Munk C."/>
            <person name="Smith L.A."/>
            <person name="Smith T.J."/>
            <person name="Sutton G."/>
            <person name="Brettin T.S."/>
        </authorList>
    </citation>
    <scope>NUCLEOTIDE SEQUENCE [LARGE SCALE GENOMIC DNA]</scope>
    <source>
        <strain>657 / Type Ba4</strain>
    </source>
</reference>
<proteinExistence type="inferred from homology"/>
<feature type="chain" id="PRO_1000203749" description="Serine--tRNA ligase">
    <location>
        <begin position="1"/>
        <end position="426"/>
    </location>
</feature>
<feature type="binding site" evidence="1">
    <location>
        <begin position="233"/>
        <end position="235"/>
    </location>
    <ligand>
        <name>L-serine</name>
        <dbReference type="ChEBI" id="CHEBI:33384"/>
    </ligand>
</feature>
<feature type="binding site" evidence="1">
    <location>
        <begin position="264"/>
        <end position="266"/>
    </location>
    <ligand>
        <name>ATP</name>
        <dbReference type="ChEBI" id="CHEBI:30616"/>
    </ligand>
</feature>
<feature type="binding site" evidence="1">
    <location>
        <position position="287"/>
    </location>
    <ligand>
        <name>L-serine</name>
        <dbReference type="ChEBI" id="CHEBI:33384"/>
    </ligand>
</feature>
<feature type="binding site" evidence="1">
    <location>
        <begin position="351"/>
        <end position="354"/>
    </location>
    <ligand>
        <name>ATP</name>
        <dbReference type="ChEBI" id="CHEBI:30616"/>
    </ligand>
</feature>
<feature type="binding site" evidence="1">
    <location>
        <position position="387"/>
    </location>
    <ligand>
        <name>L-serine</name>
        <dbReference type="ChEBI" id="CHEBI:33384"/>
    </ligand>
</feature>
<gene>
    <name evidence="1" type="primary">serS</name>
    <name type="ordered locus">CLJ_B0021</name>
</gene>
<protein>
    <recommendedName>
        <fullName evidence="1">Serine--tRNA ligase</fullName>
        <ecNumber evidence="1">6.1.1.11</ecNumber>
    </recommendedName>
    <alternativeName>
        <fullName evidence="1">Seryl-tRNA synthetase</fullName>
        <shortName evidence="1">SerRS</shortName>
    </alternativeName>
    <alternativeName>
        <fullName evidence="1">Seryl-tRNA(Ser/Sec) synthetase</fullName>
    </alternativeName>
</protein>
<dbReference type="EC" id="6.1.1.11" evidence="1"/>
<dbReference type="EMBL" id="CP001083">
    <property type="protein sequence ID" value="ACQ53357.1"/>
    <property type="molecule type" value="Genomic_DNA"/>
</dbReference>
<dbReference type="RefSeq" id="WP_012720915.1">
    <property type="nucleotide sequence ID" value="NC_012658.1"/>
</dbReference>
<dbReference type="SMR" id="C3KXS1"/>
<dbReference type="KEGG" id="cbi:CLJ_B0021"/>
<dbReference type="HOGENOM" id="CLU_023797_1_1_9"/>
<dbReference type="UniPathway" id="UPA00906">
    <property type="reaction ID" value="UER00895"/>
</dbReference>
<dbReference type="Proteomes" id="UP000002333">
    <property type="component" value="Chromosome"/>
</dbReference>
<dbReference type="GO" id="GO:0005737">
    <property type="term" value="C:cytoplasm"/>
    <property type="evidence" value="ECO:0007669"/>
    <property type="project" value="UniProtKB-SubCell"/>
</dbReference>
<dbReference type="GO" id="GO:0005524">
    <property type="term" value="F:ATP binding"/>
    <property type="evidence" value="ECO:0007669"/>
    <property type="project" value="UniProtKB-UniRule"/>
</dbReference>
<dbReference type="GO" id="GO:0140096">
    <property type="term" value="F:catalytic activity, acting on a protein"/>
    <property type="evidence" value="ECO:0007669"/>
    <property type="project" value="UniProtKB-ARBA"/>
</dbReference>
<dbReference type="GO" id="GO:0004828">
    <property type="term" value="F:serine-tRNA ligase activity"/>
    <property type="evidence" value="ECO:0007669"/>
    <property type="project" value="UniProtKB-UniRule"/>
</dbReference>
<dbReference type="GO" id="GO:0016740">
    <property type="term" value="F:transferase activity"/>
    <property type="evidence" value="ECO:0007669"/>
    <property type="project" value="UniProtKB-ARBA"/>
</dbReference>
<dbReference type="GO" id="GO:0016260">
    <property type="term" value="P:selenocysteine biosynthetic process"/>
    <property type="evidence" value="ECO:0007669"/>
    <property type="project" value="UniProtKB-UniRule"/>
</dbReference>
<dbReference type="GO" id="GO:0006434">
    <property type="term" value="P:seryl-tRNA aminoacylation"/>
    <property type="evidence" value="ECO:0007669"/>
    <property type="project" value="UniProtKB-UniRule"/>
</dbReference>
<dbReference type="CDD" id="cd00770">
    <property type="entry name" value="SerRS_core"/>
    <property type="match status" value="1"/>
</dbReference>
<dbReference type="Gene3D" id="3.30.930.10">
    <property type="entry name" value="Bira Bifunctional Protein, Domain 2"/>
    <property type="match status" value="1"/>
</dbReference>
<dbReference type="Gene3D" id="1.10.287.40">
    <property type="entry name" value="Serine-tRNA synthetase, tRNA binding domain"/>
    <property type="match status" value="1"/>
</dbReference>
<dbReference type="HAMAP" id="MF_00176">
    <property type="entry name" value="Ser_tRNA_synth_type1"/>
    <property type="match status" value="1"/>
</dbReference>
<dbReference type="InterPro" id="IPR002314">
    <property type="entry name" value="aa-tRNA-synt_IIb"/>
</dbReference>
<dbReference type="InterPro" id="IPR006195">
    <property type="entry name" value="aa-tRNA-synth_II"/>
</dbReference>
<dbReference type="InterPro" id="IPR045864">
    <property type="entry name" value="aa-tRNA-synth_II/BPL/LPL"/>
</dbReference>
<dbReference type="InterPro" id="IPR002317">
    <property type="entry name" value="Ser-tRNA-ligase_type_1"/>
</dbReference>
<dbReference type="InterPro" id="IPR015866">
    <property type="entry name" value="Ser-tRNA-synth_1_N"/>
</dbReference>
<dbReference type="InterPro" id="IPR042103">
    <property type="entry name" value="SerRS_1_N_sf"/>
</dbReference>
<dbReference type="InterPro" id="IPR033729">
    <property type="entry name" value="SerRS_core"/>
</dbReference>
<dbReference type="InterPro" id="IPR010978">
    <property type="entry name" value="tRNA-bd_arm"/>
</dbReference>
<dbReference type="NCBIfam" id="TIGR00414">
    <property type="entry name" value="serS"/>
    <property type="match status" value="1"/>
</dbReference>
<dbReference type="PANTHER" id="PTHR43697:SF1">
    <property type="entry name" value="SERINE--TRNA LIGASE"/>
    <property type="match status" value="1"/>
</dbReference>
<dbReference type="PANTHER" id="PTHR43697">
    <property type="entry name" value="SERYL-TRNA SYNTHETASE"/>
    <property type="match status" value="1"/>
</dbReference>
<dbReference type="Pfam" id="PF02403">
    <property type="entry name" value="Seryl_tRNA_N"/>
    <property type="match status" value="1"/>
</dbReference>
<dbReference type="Pfam" id="PF00587">
    <property type="entry name" value="tRNA-synt_2b"/>
    <property type="match status" value="1"/>
</dbReference>
<dbReference type="PIRSF" id="PIRSF001529">
    <property type="entry name" value="Ser-tRNA-synth_IIa"/>
    <property type="match status" value="1"/>
</dbReference>
<dbReference type="PRINTS" id="PR00981">
    <property type="entry name" value="TRNASYNTHSER"/>
</dbReference>
<dbReference type="SUPFAM" id="SSF55681">
    <property type="entry name" value="Class II aaRS and biotin synthetases"/>
    <property type="match status" value="1"/>
</dbReference>
<dbReference type="SUPFAM" id="SSF46589">
    <property type="entry name" value="tRNA-binding arm"/>
    <property type="match status" value="1"/>
</dbReference>
<dbReference type="PROSITE" id="PS50862">
    <property type="entry name" value="AA_TRNA_LIGASE_II"/>
    <property type="match status" value="1"/>
</dbReference>
<sequence>MLDLKRIRNNSNEIKEALNNRGEKFDVTVIDEVLKLDEERRNILVKVEVLKSKRNQVSSEVPKLKKEGKDVSNIVAEMKNLSEEIKGFDATLAKIDEKIQYIMLRIPNIPNPQVPDGETDEDNIEIRNWLEPTKFDFEPKAHWDIGTNLNILDFQRAGKVTGSRFTFYKGLGARLERAVISYFLDTHTEKHGYIEILPPYMVNRTSMIGTGQLPKFEEDAFKISEDDYFLIPTAEVPVTNLYRDEVLKGDELPLKHVAYSACFRSEAGSAGRDTRGLVRQHQFNKVELVKFTKPEQSYDELEKLTNDAETVLKELGIPYRVVRICKGDLGFTAALKYDLEVWMPSYNRYVEISSCSNFEDFQARRANIRYKEDSKAKPQYVHTLNGSGVAIGRTVAAILENYQNEDGSVTIPEVLRPYMGGKEAIK</sequence>